<comment type="function">
    <text evidence="1">Attaches a formyl group to the free amino group of methionyl-tRNA(fMet). The formyl group appears to play a dual role in the initiator identity of N-formylmethionyl-tRNA by promoting its recognition by IF2 and preventing the misappropriation of this tRNA by the elongation apparatus.</text>
</comment>
<comment type="catalytic activity">
    <reaction evidence="1">
        <text>L-methionyl-tRNA(fMet) + (6R)-10-formyltetrahydrofolate = N-formyl-L-methionyl-tRNA(fMet) + (6S)-5,6,7,8-tetrahydrofolate + H(+)</text>
        <dbReference type="Rhea" id="RHEA:24380"/>
        <dbReference type="Rhea" id="RHEA-COMP:9952"/>
        <dbReference type="Rhea" id="RHEA-COMP:9953"/>
        <dbReference type="ChEBI" id="CHEBI:15378"/>
        <dbReference type="ChEBI" id="CHEBI:57453"/>
        <dbReference type="ChEBI" id="CHEBI:78530"/>
        <dbReference type="ChEBI" id="CHEBI:78844"/>
        <dbReference type="ChEBI" id="CHEBI:195366"/>
        <dbReference type="EC" id="2.1.2.9"/>
    </reaction>
</comment>
<comment type="similarity">
    <text evidence="1">Belongs to the Fmt family.</text>
</comment>
<sequence>MTGMRIVFMGTPEFACPTLRTLIERGEKVVAVVTQPDRPKGRGQQTLPPPVKVVAEQHGIPVLQPVKVRLPESIEEIRGLNPDLIVVIAFGQILPKALLDIPKYGCINVHASLLPRYRGAAPLNWCIINGENETGVTTMMMDVGLDTGDMLLKRSTPIGADEDTQSLHDRMSQLGAELLAETLDRLARGELVPEKQDDALTCYAPMMKKEDGLIDWSRDAQAIKNQVRGMTPWPGAYSFLDDKLLKVFRVQTASGSGAPGEILSCGRDGIEVACGTGSLVIAELQLEGKKRLPAGDFLAGYKLQPGGLLGKKDASVGV</sequence>
<organism>
    <name type="scientific">Citrifermentans bemidjiense (strain ATCC BAA-1014 / DSM 16622 / JCM 12645 / Bem)</name>
    <name type="common">Geobacter bemidjiensis</name>
    <dbReference type="NCBI Taxonomy" id="404380"/>
    <lineage>
        <taxon>Bacteria</taxon>
        <taxon>Pseudomonadati</taxon>
        <taxon>Thermodesulfobacteriota</taxon>
        <taxon>Desulfuromonadia</taxon>
        <taxon>Geobacterales</taxon>
        <taxon>Geobacteraceae</taxon>
        <taxon>Citrifermentans</taxon>
    </lineage>
</organism>
<feature type="chain" id="PRO_1000098407" description="Methionyl-tRNA formyltransferase">
    <location>
        <begin position="1"/>
        <end position="318"/>
    </location>
</feature>
<feature type="binding site" evidence="1">
    <location>
        <begin position="112"/>
        <end position="115"/>
    </location>
    <ligand>
        <name>(6S)-5,6,7,8-tetrahydrofolate</name>
        <dbReference type="ChEBI" id="CHEBI:57453"/>
    </ligand>
</feature>
<dbReference type="EC" id="2.1.2.9" evidence="1"/>
<dbReference type="EMBL" id="CP001124">
    <property type="protein sequence ID" value="ACH37663.1"/>
    <property type="molecule type" value="Genomic_DNA"/>
</dbReference>
<dbReference type="RefSeq" id="WP_012529071.1">
    <property type="nucleotide sequence ID" value="NC_011146.1"/>
</dbReference>
<dbReference type="SMR" id="B5ED77"/>
<dbReference type="STRING" id="404380.Gbem_0635"/>
<dbReference type="KEGG" id="gbm:Gbem_0635"/>
<dbReference type="eggNOG" id="COG0223">
    <property type="taxonomic scope" value="Bacteria"/>
</dbReference>
<dbReference type="HOGENOM" id="CLU_033347_1_1_7"/>
<dbReference type="OrthoDB" id="9802815at2"/>
<dbReference type="Proteomes" id="UP000008825">
    <property type="component" value="Chromosome"/>
</dbReference>
<dbReference type="GO" id="GO:0005829">
    <property type="term" value="C:cytosol"/>
    <property type="evidence" value="ECO:0007669"/>
    <property type="project" value="TreeGrafter"/>
</dbReference>
<dbReference type="GO" id="GO:0004479">
    <property type="term" value="F:methionyl-tRNA formyltransferase activity"/>
    <property type="evidence" value="ECO:0007669"/>
    <property type="project" value="UniProtKB-UniRule"/>
</dbReference>
<dbReference type="CDD" id="cd08646">
    <property type="entry name" value="FMT_core_Met-tRNA-FMT_N"/>
    <property type="match status" value="1"/>
</dbReference>
<dbReference type="CDD" id="cd08704">
    <property type="entry name" value="Met_tRNA_FMT_C"/>
    <property type="match status" value="1"/>
</dbReference>
<dbReference type="FunFam" id="3.40.50.12230:FF:000001">
    <property type="entry name" value="Methionyl-tRNA formyltransferase"/>
    <property type="match status" value="1"/>
</dbReference>
<dbReference type="Gene3D" id="3.10.25.10">
    <property type="entry name" value="Formyl transferase, C-terminal domain"/>
    <property type="match status" value="1"/>
</dbReference>
<dbReference type="Gene3D" id="3.40.50.170">
    <property type="entry name" value="Formyl transferase, N-terminal domain"/>
    <property type="match status" value="1"/>
</dbReference>
<dbReference type="HAMAP" id="MF_00182">
    <property type="entry name" value="Formyl_trans"/>
    <property type="match status" value="1"/>
</dbReference>
<dbReference type="InterPro" id="IPR005794">
    <property type="entry name" value="Fmt"/>
</dbReference>
<dbReference type="InterPro" id="IPR005793">
    <property type="entry name" value="Formyl_trans_C"/>
</dbReference>
<dbReference type="InterPro" id="IPR037022">
    <property type="entry name" value="Formyl_trans_C_sf"/>
</dbReference>
<dbReference type="InterPro" id="IPR002376">
    <property type="entry name" value="Formyl_transf_N"/>
</dbReference>
<dbReference type="InterPro" id="IPR036477">
    <property type="entry name" value="Formyl_transf_N_sf"/>
</dbReference>
<dbReference type="InterPro" id="IPR011034">
    <property type="entry name" value="Formyl_transferase-like_C_sf"/>
</dbReference>
<dbReference type="InterPro" id="IPR044135">
    <property type="entry name" value="Met-tRNA-FMT_C"/>
</dbReference>
<dbReference type="InterPro" id="IPR041711">
    <property type="entry name" value="Met-tRNA-FMT_N"/>
</dbReference>
<dbReference type="NCBIfam" id="TIGR00460">
    <property type="entry name" value="fmt"/>
    <property type="match status" value="1"/>
</dbReference>
<dbReference type="PANTHER" id="PTHR11138">
    <property type="entry name" value="METHIONYL-TRNA FORMYLTRANSFERASE"/>
    <property type="match status" value="1"/>
</dbReference>
<dbReference type="PANTHER" id="PTHR11138:SF5">
    <property type="entry name" value="METHIONYL-TRNA FORMYLTRANSFERASE, MITOCHONDRIAL"/>
    <property type="match status" value="1"/>
</dbReference>
<dbReference type="Pfam" id="PF02911">
    <property type="entry name" value="Formyl_trans_C"/>
    <property type="match status" value="1"/>
</dbReference>
<dbReference type="Pfam" id="PF00551">
    <property type="entry name" value="Formyl_trans_N"/>
    <property type="match status" value="1"/>
</dbReference>
<dbReference type="SUPFAM" id="SSF50486">
    <property type="entry name" value="FMT C-terminal domain-like"/>
    <property type="match status" value="1"/>
</dbReference>
<dbReference type="SUPFAM" id="SSF53328">
    <property type="entry name" value="Formyltransferase"/>
    <property type="match status" value="1"/>
</dbReference>
<evidence type="ECO:0000255" key="1">
    <source>
        <dbReference type="HAMAP-Rule" id="MF_00182"/>
    </source>
</evidence>
<gene>
    <name evidence="1" type="primary">fmt</name>
    <name type="ordered locus">Gbem_0635</name>
</gene>
<accession>B5ED77</accession>
<name>FMT_CITBB</name>
<reference key="1">
    <citation type="submission" date="2008-07" db="EMBL/GenBank/DDBJ databases">
        <title>Complete sequence of Geobacter bemidjiensis BEM.</title>
        <authorList>
            <consortium name="US DOE Joint Genome Institute"/>
            <person name="Lucas S."/>
            <person name="Copeland A."/>
            <person name="Lapidus A."/>
            <person name="Glavina del Rio T."/>
            <person name="Dalin E."/>
            <person name="Tice H."/>
            <person name="Bruce D."/>
            <person name="Goodwin L."/>
            <person name="Pitluck S."/>
            <person name="Kiss H."/>
            <person name="Brettin T."/>
            <person name="Detter J.C."/>
            <person name="Han C."/>
            <person name="Kuske C.R."/>
            <person name="Schmutz J."/>
            <person name="Larimer F."/>
            <person name="Land M."/>
            <person name="Hauser L."/>
            <person name="Kyrpides N."/>
            <person name="Lykidis A."/>
            <person name="Lovley D."/>
            <person name="Richardson P."/>
        </authorList>
    </citation>
    <scope>NUCLEOTIDE SEQUENCE [LARGE SCALE GENOMIC DNA]</scope>
    <source>
        <strain>ATCC BAA-1014 / DSM 16622 / JCM 12645 / Bem</strain>
    </source>
</reference>
<proteinExistence type="inferred from homology"/>
<keyword id="KW-0648">Protein biosynthesis</keyword>
<keyword id="KW-1185">Reference proteome</keyword>
<keyword id="KW-0808">Transferase</keyword>
<protein>
    <recommendedName>
        <fullName evidence="1">Methionyl-tRNA formyltransferase</fullName>
        <ecNumber evidence="1">2.1.2.9</ecNumber>
    </recommendedName>
</protein>